<evidence type="ECO:0000250" key="1"/>
<evidence type="ECO:0000255" key="2">
    <source>
        <dbReference type="PROSITE-ProRule" id="PRU01150"/>
    </source>
</evidence>
<evidence type="ECO:0000269" key="3">
    <source>
    </source>
</evidence>
<evidence type="ECO:0000269" key="4">
    <source>
    </source>
</evidence>
<evidence type="ECO:0000269" key="5">
    <source>
    </source>
</evidence>
<evidence type="ECO:0000269" key="6">
    <source>
    </source>
</evidence>
<evidence type="ECO:0000269" key="7">
    <source>
    </source>
</evidence>
<evidence type="ECO:0000305" key="8"/>
<dbReference type="EMBL" id="U14913">
    <property type="protein sequence ID" value="AAB67446.1"/>
    <property type="status" value="ALT_INIT"/>
    <property type="molecule type" value="Genomic_DNA"/>
</dbReference>
<dbReference type="EMBL" id="BK006945">
    <property type="protein sequence ID" value="DAA09534.1"/>
    <property type="status" value="ALT_INIT"/>
    <property type="molecule type" value="Genomic_DNA"/>
</dbReference>
<dbReference type="PIR" id="S48568">
    <property type="entry name" value="S48568"/>
</dbReference>
<dbReference type="RefSeq" id="NP_013319.1">
    <property type="nucleotide sequence ID" value="NM_001182105.1"/>
</dbReference>
<dbReference type="BioGRID" id="31485">
    <property type="interactions" value="281"/>
</dbReference>
<dbReference type="DIP" id="DIP-4791N"/>
<dbReference type="FunCoup" id="Q05809">
    <property type="interactions" value="51"/>
</dbReference>
<dbReference type="MINT" id="Q05809"/>
<dbReference type="STRING" id="4932.YLR218C"/>
<dbReference type="iPTMnet" id="Q05809"/>
<dbReference type="PaxDb" id="4932-YLR218C"/>
<dbReference type="PeptideAtlas" id="Q05809"/>
<dbReference type="GeneID" id="850915"/>
<dbReference type="KEGG" id="sce:YLR218C"/>
<dbReference type="AGR" id="SGD:S000004208"/>
<dbReference type="SGD" id="S000004208">
    <property type="gene designation" value="COA4"/>
</dbReference>
<dbReference type="eggNOG" id="KOG4138">
    <property type="taxonomic scope" value="Eukaryota"/>
</dbReference>
<dbReference type="HOGENOM" id="CLU_123495_0_0_1"/>
<dbReference type="InParanoid" id="Q05809"/>
<dbReference type="OrthoDB" id="5586401at2759"/>
<dbReference type="BioCyc" id="YEAST:G3O-32332-MONOMER"/>
<dbReference type="BioGRID-ORCS" id="850915">
    <property type="hits" value="0 hits in 10 CRISPR screens"/>
</dbReference>
<dbReference type="PRO" id="PR:Q05809"/>
<dbReference type="Proteomes" id="UP000002311">
    <property type="component" value="Chromosome XII"/>
</dbReference>
<dbReference type="RNAct" id="Q05809">
    <property type="molecule type" value="protein"/>
</dbReference>
<dbReference type="GO" id="GO:0005737">
    <property type="term" value="C:cytoplasm"/>
    <property type="evidence" value="ECO:0007005"/>
    <property type="project" value="SGD"/>
</dbReference>
<dbReference type="GO" id="GO:0005743">
    <property type="term" value="C:mitochondrial inner membrane"/>
    <property type="evidence" value="ECO:0007669"/>
    <property type="project" value="UniProtKB-SubCell"/>
</dbReference>
<dbReference type="GO" id="GO:0005758">
    <property type="term" value="C:mitochondrial intermembrane space"/>
    <property type="evidence" value="ECO:0000314"/>
    <property type="project" value="SGD"/>
</dbReference>
<dbReference type="GO" id="GO:0005634">
    <property type="term" value="C:nucleus"/>
    <property type="evidence" value="ECO:0007005"/>
    <property type="project" value="SGD"/>
</dbReference>
<dbReference type="GO" id="GO:0033617">
    <property type="term" value="P:mitochondrial cytochrome c oxidase assembly"/>
    <property type="evidence" value="ECO:0000315"/>
    <property type="project" value="SGD"/>
</dbReference>
<dbReference type="GO" id="GO:0033108">
    <property type="term" value="P:mitochondrial respiratory chain complex assembly"/>
    <property type="evidence" value="ECO:0000315"/>
    <property type="project" value="SGD"/>
</dbReference>
<dbReference type="InterPro" id="IPR010625">
    <property type="entry name" value="CHCH"/>
</dbReference>
<dbReference type="InterPro" id="IPR039870">
    <property type="entry name" value="Coa4-like"/>
</dbReference>
<dbReference type="PANTHER" id="PTHR13639">
    <property type="entry name" value="CYTOCHROME C OXIDASE ASSEMBLY FACTOR 4 HOMOLOG, MITOCHONDRIAL"/>
    <property type="match status" value="1"/>
</dbReference>
<dbReference type="PANTHER" id="PTHR13639:SF2">
    <property type="entry name" value="CYTOCHROME C OXIDASE ASSEMBLY FACTOR 4 HOMOLOG, MITOCHONDRIAL"/>
    <property type="match status" value="1"/>
</dbReference>
<dbReference type="Pfam" id="PF06747">
    <property type="entry name" value="CHCH"/>
    <property type="match status" value="1"/>
</dbReference>
<dbReference type="PROSITE" id="PS51808">
    <property type="entry name" value="CHCH"/>
    <property type="match status" value="1"/>
</dbReference>
<name>COA4_YEAST</name>
<reference key="1">
    <citation type="journal article" date="1997" name="Nature">
        <title>The nucleotide sequence of Saccharomyces cerevisiae chromosome XII.</title>
        <authorList>
            <person name="Johnston M."/>
            <person name="Hillier L.W."/>
            <person name="Riles L."/>
            <person name="Albermann K."/>
            <person name="Andre B."/>
            <person name="Ansorge W."/>
            <person name="Benes V."/>
            <person name="Brueckner M."/>
            <person name="Delius H."/>
            <person name="Dubois E."/>
            <person name="Duesterhoeft A."/>
            <person name="Entian K.-D."/>
            <person name="Floeth M."/>
            <person name="Goffeau A."/>
            <person name="Hebling U."/>
            <person name="Heumann K."/>
            <person name="Heuss-Neitzel D."/>
            <person name="Hilbert H."/>
            <person name="Hilger F."/>
            <person name="Kleine K."/>
            <person name="Koetter P."/>
            <person name="Louis E.J."/>
            <person name="Messenguy F."/>
            <person name="Mewes H.-W."/>
            <person name="Miosga T."/>
            <person name="Moestl D."/>
            <person name="Mueller-Auer S."/>
            <person name="Nentwich U."/>
            <person name="Obermaier B."/>
            <person name="Piravandi E."/>
            <person name="Pohl T.M."/>
            <person name="Portetelle D."/>
            <person name="Purnelle B."/>
            <person name="Rechmann S."/>
            <person name="Rieger M."/>
            <person name="Rinke M."/>
            <person name="Rose M."/>
            <person name="Scharfe M."/>
            <person name="Scherens B."/>
            <person name="Scholler P."/>
            <person name="Schwager C."/>
            <person name="Schwarz S."/>
            <person name="Underwood A.P."/>
            <person name="Urrestarazu L.A."/>
            <person name="Vandenbol M."/>
            <person name="Verhasselt P."/>
            <person name="Vierendeels F."/>
            <person name="Voet M."/>
            <person name="Volckaert G."/>
            <person name="Voss H."/>
            <person name="Wambutt R."/>
            <person name="Wedler E."/>
            <person name="Wedler H."/>
            <person name="Zimmermann F.K."/>
            <person name="Zollner A."/>
            <person name="Hani J."/>
            <person name="Hoheisel J.D."/>
        </authorList>
    </citation>
    <scope>NUCLEOTIDE SEQUENCE [LARGE SCALE GENOMIC DNA]</scope>
    <source>
        <strain>ATCC 204508 / S288c</strain>
    </source>
</reference>
<reference key="2">
    <citation type="journal article" date="2014" name="G3 (Bethesda)">
        <title>The reference genome sequence of Saccharomyces cerevisiae: Then and now.</title>
        <authorList>
            <person name="Engel S.R."/>
            <person name="Dietrich F.S."/>
            <person name="Fisk D.G."/>
            <person name="Binkley G."/>
            <person name="Balakrishnan R."/>
            <person name="Costanzo M.C."/>
            <person name="Dwight S.S."/>
            <person name="Hitz B.C."/>
            <person name="Karra K."/>
            <person name="Nash R.S."/>
            <person name="Weng S."/>
            <person name="Wong E.D."/>
            <person name="Lloyd P."/>
            <person name="Skrzypek M.S."/>
            <person name="Miyasato S.R."/>
            <person name="Simison M."/>
            <person name="Cherry J.M."/>
        </authorList>
    </citation>
    <scope>GENOME REANNOTATION</scope>
    <source>
        <strain>ATCC 204508 / S288c</strain>
    </source>
</reference>
<reference key="3">
    <citation type="journal article" date="2003" name="Nature">
        <title>Global analysis of protein localization in budding yeast.</title>
        <authorList>
            <person name="Huh W.-K."/>
            <person name="Falvo J.V."/>
            <person name="Gerke L.C."/>
            <person name="Carroll A.S."/>
            <person name="Howson R.W."/>
            <person name="Weissman J.S."/>
            <person name="O'Shea E.K."/>
        </authorList>
    </citation>
    <scope>SUBCELLULAR LOCATION [LARGE SCALE ANALYSIS]</scope>
</reference>
<reference key="4">
    <citation type="journal article" date="2003" name="Nature">
        <title>Global analysis of protein expression in yeast.</title>
        <authorList>
            <person name="Ghaemmaghami S."/>
            <person name="Huh W.-K."/>
            <person name="Bower K."/>
            <person name="Howson R.W."/>
            <person name="Belle A."/>
            <person name="Dephoure N."/>
            <person name="O'Shea E.K."/>
            <person name="Weissman J.S."/>
        </authorList>
    </citation>
    <scope>LEVEL OF PROTEIN EXPRESSION [LARGE SCALE ANALYSIS]</scope>
</reference>
<reference key="5">
    <citation type="journal article" date="2009" name="J. Mol. Biol.">
        <title>Systematic analysis of the twin cx(9)c protein family.</title>
        <authorList>
            <person name="Longen S."/>
            <person name="Bien M."/>
            <person name="Bihlmaier K."/>
            <person name="Kloeppel C."/>
            <person name="Kauff F."/>
            <person name="Hammermeister M."/>
            <person name="Westermann B."/>
            <person name="Herrmann J.M."/>
            <person name="Riemer J."/>
        </authorList>
    </citation>
    <scope>IDENTIFICATION OF PROBABLE INITIATION SITE</scope>
    <scope>DOMAIN</scope>
    <scope>FUNCTION</scope>
    <scope>SUBCELLULAR LOCATION</scope>
</reference>
<reference key="6">
    <citation type="journal article" date="2010" name="Mol. Cell. Biol.">
        <title>Analysis of Leigh syndrome mutations in the yeast SURF1 homolog reveals a new member of the cytochrome oxidase assembly factor family.</title>
        <authorList>
            <person name="Bestwick M."/>
            <person name="Jeong M.Y."/>
            <person name="Khalimonchuk O."/>
            <person name="Kim H."/>
            <person name="Winge D.R."/>
        </authorList>
    </citation>
    <scope>FUNCTION</scope>
    <scope>SUBCELLULAR LOCATION</scope>
</reference>
<reference key="7">
    <citation type="journal article" date="2012" name="Mol. Cell. Proteomics">
        <title>Intermembrane space proteome of yeast mitochondria.</title>
        <authorList>
            <person name="Voegtle F.N."/>
            <person name="Burkhart J.M."/>
            <person name="Rao S."/>
            <person name="Gerbeth C."/>
            <person name="Hinrichs J."/>
            <person name="Martinou J.C."/>
            <person name="Chacinska A."/>
            <person name="Sickmann A."/>
            <person name="Zahedi R.P."/>
            <person name="Meisinger C."/>
        </authorList>
    </citation>
    <scope>IDENTIFICATION BY MASS SPECTROMETRY</scope>
    <scope>SUBCELLULAR LOCATION [LARGE SCALE ANALYSIS]</scope>
</reference>
<proteinExistence type="evidence at protein level"/>
<keyword id="KW-1015">Disulfide bond</keyword>
<keyword id="KW-0472">Membrane</keyword>
<keyword id="KW-0496">Mitochondrion</keyword>
<keyword id="KW-0999">Mitochondrion inner membrane</keyword>
<keyword id="KW-1185">Reference proteome</keyword>
<keyword id="KW-0677">Repeat</keyword>
<gene>
    <name type="primary">COA4</name>
    <name type="synonym">CMC3</name>
    <name type="ordered locus">YLR218C</name>
</gene>
<protein>
    <recommendedName>
        <fullName>Cytochrome oxidase assembly factor 4</fullName>
    </recommendedName>
    <alternativeName>
        <fullName>Cx9C motif-containing protein 3</fullName>
    </alternativeName>
</protein>
<sequence length="96" mass="11239">MSETGETSEYYKQALEEYKEVQEDEDPDVWDTRISKTGCYVENLALQLCHAETGDWRQCFNEMALFRKCWEKNGNRERVSTVDVDGTTSKDSEKKK</sequence>
<comment type="function">
    <text evidence="5 6">Involved in cytochrome c oxidase assembly or stability.</text>
</comment>
<comment type="subcellular location">
    <subcellularLocation>
        <location evidence="3 5 6">Mitochondrion inner membrane</location>
        <topology evidence="3 5 6">Peripheral membrane protein</topology>
        <orientation evidence="3 5 6">Intermembrane side</orientation>
    </subcellularLocation>
    <subcellularLocation>
        <location evidence="7">Mitochondrion intermembrane space</location>
    </subcellularLocation>
    <text>Imported into the mitochondria via the mitochondrial MIA40-ERV1 machinery.</text>
</comment>
<comment type="domain">
    <text evidence="1">The twin Cx9C motifs are involved in the recognition by the mitochondrial MIA40-ERV1 disulfide relay system and the subsequent transfer of disulfide bonds by dithiol/disulfide exchange reactions to the newly imported protein.</text>
</comment>
<comment type="miscellaneous">
    <text evidence="4">Present with 907 molecules/cell in log phase SD medium.</text>
</comment>
<comment type="similarity">
    <text evidence="8">Belongs to the COA4 family.</text>
</comment>
<comment type="sequence caution" evidence="8">
    <conflict type="erroneous initiation">
        <sequence resource="EMBL-CDS" id="AAB67446"/>
    </conflict>
    <text>Extended N-terminus.</text>
</comment>
<comment type="sequence caution" evidence="8">
    <conflict type="erroneous initiation">
        <sequence resource="EMBL-CDS" id="DAA09534"/>
    </conflict>
    <text>Extended N-terminus.</text>
</comment>
<organism>
    <name type="scientific">Saccharomyces cerevisiae (strain ATCC 204508 / S288c)</name>
    <name type="common">Baker's yeast</name>
    <dbReference type="NCBI Taxonomy" id="559292"/>
    <lineage>
        <taxon>Eukaryota</taxon>
        <taxon>Fungi</taxon>
        <taxon>Dikarya</taxon>
        <taxon>Ascomycota</taxon>
        <taxon>Saccharomycotina</taxon>
        <taxon>Saccharomycetes</taxon>
        <taxon>Saccharomycetales</taxon>
        <taxon>Saccharomycetaceae</taxon>
        <taxon>Saccharomyces</taxon>
    </lineage>
</organism>
<accession>Q05809</accession>
<accession>D6VYL8</accession>
<feature type="chain" id="PRO_0000247207" description="Cytochrome oxidase assembly factor 4">
    <location>
        <begin position="1"/>
        <end position="96"/>
    </location>
</feature>
<feature type="domain" description="CHCH" evidence="2">
    <location>
        <begin position="36"/>
        <end position="77"/>
    </location>
</feature>
<feature type="short sequence motif" description="Cx9C motif 1" evidence="2">
    <location>
        <begin position="39"/>
        <end position="49"/>
    </location>
</feature>
<feature type="short sequence motif" description="Cx9C motif 2" evidence="2">
    <location>
        <begin position="59"/>
        <end position="69"/>
    </location>
</feature>
<feature type="disulfide bond" evidence="2">
    <location>
        <begin position="39"/>
        <end position="69"/>
    </location>
</feature>
<feature type="disulfide bond" evidence="2">
    <location>
        <begin position="49"/>
        <end position="59"/>
    </location>
</feature>